<reference key="1">
    <citation type="journal article" date="2006" name="Lancet">
        <title>Complete genome sequence of USA300, an epidemic clone of community-acquired meticillin-resistant Staphylococcus aureus.</title>
        <authorList>
            <person name="Diep B.A."/>
            <person name="Gill S.R."/>
            <person name="Chang R.F."/>
            <person name="Phan T.H."/>
            <person name="Chen J.H."/>
            <person name="Davidson M.G."/>
            <person name="Lin F."/>
            <person name="Lin J."/>
            <person name="Carleton H.A."/>
            <person name="Mongodin E.F."/>
            <person name="Sensabaugh G.F."/>
            <person name="Perdreau-Remington F."/>
        </authorList>
    </citation>
    <scope>NUCLEOTIDE SEQUENCE [LARGE SCALE GENOMIC DNA]</scope>
    <source>
        <strain>USA300</strain>
    </source>
</reference>
<comment type="function">
    <text evidence="2">Catalyzes the formation of N(7)-methylguanine at position 46 (m7G46) in tRNA.</text>
</comment>
<comment type="catalytic activity">
    <reaction evidence="2">
        <text>guanosine(46) in tRNA + S-adenosyl-L-methionine = N(7)-methylguanosine(46) in tRNA + S-adenosyl-L-homocysteine</text>
        <dbReference type="Rhea" id="RHEA:42708"/>
        <dbReference type="Rhea" id="RHEA-COMP:10188"/>
        <dbReference type="Rhea" id="RHEA-COMP:10189"/>
        <dbReference type="ChEBI" id="CHEBI:57856"/>
        <dbReference type="ChEBI" id="CHEBI:59789"/>
        <dbReference type="ChEBI" id="CHEBI:74269"/>
        <dbReference type="ChEBI" id="CHEBI:74480"/>
        <dbReference type="EC" id="2.1.1.33"/>
    </reaction>
</comment>
<comment type="pathway">
    <text evidence="2">tRNA modification; N(7)-methylguanine-tRNA biosynthesis.</text>
</comment>
<comment type="similarity">
    <text evidence="2">Belongs to the class I-like SAM-binding methyltransferase superfamily. TrmB family.</text>
</comment>
<name>TRMB_STAA3</name>
<evidence type="ECO:0000250" key="1"/>
<evidence type="ECO:0000255" key="2">
    <source>
        <dbReference type="HAMAP-Rule" id="MF_01057"/>
    </source>
</evidence>
<keyword id="KW-0489">Methyltransferase</keyword>
<keyword id="KW-0949">S-adenosyl-L-methionine</keyword>
<keyword id="KW-0808">Transferase</keyword>
<keyword id="KW-0819">tRNA processing</keyword>
<protein>
    <recommendedName>
        <fullName evidence="2">tRNA (guanine-N(7)-)-methyltransferase</fullName>
        <ecNumber evidence="2">2.1.1.33</ecNumber>
    </recommendedName>
    <alternativeName>
        <fullName evidence="2">tRNA (guanine(46)-N(7))-methyltransferase</fullName>
    </alternativeName>
    <alternativeName>
        <fullName evidence="2">tRNA(m7G46)-methyltransferase</fullName>
    </alternativeName>
</protein>
<accession>Q2FFZ0</accession>
<organism>
    <name type="scientific">Staphylococcus aureus (strain USA300)</name>
    <dbReference type="NCBI Taxonomy" id="367830"/>
    <lineage>
        <taxon>Bacteria</taxon>
        <taxon>Bacillati</taxon>
        <taxon>Bacillota</taxon>
        <taxon>Bacilli</taxon>
        <taxon>Bacillales</taxon>
        <taxon>Staphylococcaceae</taxon>
        <taxon>Staphylococcus</taxon>
    </lineage>
</organism>
<dbReference type="EC" id="2.1.1.33" evidence="2"/>
<dbReference type="EMBL" id="CP000255">
    <property type="protein sequence ID" value="ABD21180.1"/>
    <property type="molecule type" value="Genomic_DNA"/>
</dbReference>
<dbReference type="RefSeq" id="WP_001266157.1">
    <property type="nucleotide sequence ID" value="NZ_CP027476.1"/>
</dbReference>
<dbReference type="SMR" id="Q2FFZ0"/>
<dbReference type="KEGG" id="saa:SAUSA300_1694"/>
<dbReference type="HOGENOM" id="CLU_050910_2_1_9"/>
<dbReference type="OMA" id="PDPQIKY"/>
<dbReference type="UniPathway" id="UPA00989"/>
<dbReference type="Proteomes" id="UP000001939">
    <property type="component" value="Chromosome"/>
</dbReference>
<dbReference type="GO" id="GO:0043527">
    <property type="term" value="C:tRNA methyltransferase complex"/>
    <property type="evidence" value="ECO:0007669"/>
    <property type="project" value="TreeGrafter"/>
</dbReference>
<dbReference type="GO" id="GO:0008176">
    <property type="term" value="F:tRNA (guanine(46)-N7)-methyltransferase activity"/>
    <property type="evidence" value="ECO:0007669"/>
    <property type="project" value="UniProtKB-UniRule"/>
</dbReference>
<dbReference type="CDD" id="cd02440">
    <property type="entry name" value="AdoMet_MTases"/>
    <property type="match status" value="1"/>
</dbReference>
<dbReference type="FunFam" id="3.40.50.150:FF:000035">
    <property type="entry name" value="tRNA (guanine-N(7)-)-methyltransferase"/>
    <property type="match status" value="1"/>
</dbReference>
<dbReference type="Gene3D" id="3.40.50.150">
    <property type="entry name" value="Vaccinia Virus protein VP39"/>
    <property type="match status" value="1"/>
</dbReference>
<dbReference type="HAMAP" id="MF_01057">
    <property type="entry name" value="tRNA_methyltr_TrmB"/>
    <property type="match status" value="1"/>
</dbReference>
<dbReference type="InterPro" id="IPR029063">
    <property type="entry name" value="SAM-dependent_MTases_sf"/>
</dbReference>
<dbReference type="InterPro" id="IPR003358">
    <property type="entry name" value="tRNA_(Gua-N-7)_MeTrfase_Trmb"/>
</dbReference>
<dbReference type="InterPro" id="IPR055361">
    <property type="entry name" value="tRNA_methyltr_TrmB_bact"/>
</dbReference>
<dbReference type="NCBIfam" id="NF001080">
    <property type="entry name" value="PRK00121.2-2"/>
    <property type="match status" value="1"/>
</dbReference>
<dbReference type="NCBIfam" id="TIGR00091">
    <property type="entry name" value="tRNA (guanosine(46)-N7)-methyltransferase TrmB"/>
    <property type="match status" value="1"/>
</dbReference>
<dbReference type="PANTHER" id="PTHR23417">
    <property type="entry name" value="3-DEOXY-D-MANNO-OCTULOSONIC-ACID TRANSFERASE/TRNA GUANINE-N 7 - -METHYLTRANSFERASE"/>
    <property type="match status" value="1"/>
</dbReference>
<dbReference type="PANTHER" id="PTHR23417:SF14">
    <property type="entry name" value="PENTACOTRIPEPTIDE-REPEAT REGION OF PRORP DOMAIN-CONTAINING PROTEIN"/>
    <property type="match status" value="1"/>
</dbReference>
<dbReference type="Pfam" id="PF02390">
    <property type="entry name" value="Methyltransf_4"/>
    <property type="match status" value="1"/>
</dbReference>
<dbReference type="SUPFAM" id="SSF53335">
    <property type="entry name" value="S-adenosyl-L-methionine-dependent methyltransferases"/>
    <property type="match status" value="1"/>
</dbReference>
<dbReference type="PROSITE" id="PS51625">
    <property type="entry name" value="SAM_MT_TRMB"/>
    <property type="match status" value="1"/>
</dbReference>
<feature type="chain" id="PRO_0000288233" description="tRNA (guanine-N(7)-)-methyltransferase">
    <location>
        <begin position="1"/>
        <end position="214"/>
    </location>
</feature>
<feature type="active site" evidence="1">
    <location>
        <position position="117"/>
    </location>
</feature>
<feature type="binding site" evidence="2">
    <location>
        <position position="43"/>
    </location>
    <ligand>
        <name>S-adenosyl-L-methionine</name>
        <dbReference type="ChEBI" id="CHEBI:59789"/>
    </ligand>
</feature>
<feature type="binding site" evidence="2">
    <location>
        <position position="68"/>
    </location>
    <ligand>
        <name>S-adenosyl-L-methionine</name>
        <dbReference type="ChEBI" id="CHEBI:59789"/>
    </ligand>
</feature>
<feature type="binding site" evidence="2">
    <location>
        <position position="95"/>
    </location>
    <ligand>
        <name>S-adenosyl-L-methionine</name>
        <dbReference type="ChEBI" id="CHEBI:59789"/>
    </ligand>
</feature>
<feature type="binding site" evidence="2">
    <location>
        <position position="117"/>
    </location>
    <ligand>
        <name>S-adenosyl-L-methionine</name>
        <dbReference type="ChEBI" id="CHEBI:59789"/>
    </ligand>
</feature>
<feature type="binding site" evidence="2">
    <location>
        <position position="121"/>
    </location>
    <ligand>
        <name>substrate</name>
    </ligand>
</feature>
<feature type="binding site" evidence="2">
    <location>
        <position position="153"/>
    </location>
    <ligand>
        <name>substrate</name>
    </ligand>
</feature>
<feature type="binding site" evidence="2">
    <location>
        <begin position="190"/>
        <end position="193"/>
    </location>
    <ligand>
        <name>substrate</name>
    </ligand>
</feature>
<gene>
    <name evidence="2" type="primary">trmB</name>
    <name type="ordered locus">SAUSA300_1694</name>
</gene>
<proteinExistence type="inferred from homology"/>
<sequence>MRVRYKPWAEDYLKDHPELVDMDGQHAGKMTEWFDKTQPIHIEIGSGMGQFITTLAAQNPHINYISMEREKSIVYKVLDKVKEMGLTNLKIICNDAIELNEYFKDGEVSRIYLNFSDPWPKNRHAKRRLTYHTFLALYQQILNDEGDLHFKTDNRGLFAYSLESMSQFGMYFTKINLNLHQEDDGSNILTEYEKKFSDKGSRIYRMEAKFHSQK</sequence>